<comment type="function">
    <text evidence="1">Catalyzes the pyridoxal-phosphate-dependent breakdown of phosphoethanolamine, converting it to ammonia, inorganic phosphate and acetaldehyde.</text>
</comment>
<comment type="catalytic activity">
    <reaction>
        <text>phosphoethanolamine + H2O = acetaldehyde + NH4(+) + phosphate</text>
        <dbReference type="Rhea" id="RHEA:17889"/>
        <dbReference type="ChEBI" id="CHEBI:15343"/>
        <dbReference type="ChEBI" id="CHEBI:15377"/>
        <dbReference type="ChEBI" id="CHEBI:28938"/>
        <dbReference type="ChEBI" id="CHEBI:43474"/>
        <dbReference type="ChEBI" id="CHEBI:58190"/>
        <dbReference type="EC" id="4.2.3.2"/>
    </reaction>
</comment>
<comment type="cofactor">
    <cofactor evidence="1">
        <name>pyridoxal 5'-phosphate</name>
        <dbReference type="ChEBI" id="CHEBI:597326"/>
    </cofactor>
</comment>
<comment type="subunit">
    <text evidence="1">Homotetramer.</text>
</comment>
<comment type="subcellular location">
    <subcellularLocation>
        <location evidence="4">Mitochondrion</location>
    </subcellularLocation>
</comment>
<comment type="similarity">
    <text evidence="4">Belongs to the class-III pyridoxal-phosphate-dependent aminotransferase family.</text>
</comment>
<comment type="caution">
    <text evidence="2">Does not seem to possess aminotransferase activity.</text>
</comment>
<protein>
    <recommendedName>
        <fullName>Ethanolamine-phosphate phospho-lyase</fullName>
        <ecNumber>4.2.3.2</ecNumber>
    </recommendedName>
    <alternativeName>
        <fullName>Alanine--glyoxylate aminotransferase 2-like 1</fullName>
    </alternativeName>
</protein>
<name>AT2L1_BOVIN</name>
<evidence type="ECO:0000250" key="1"/>
<evidence type="ECO:0000250" key="2">
    <source>
        <dbReference type="UniProtKB" id="Q8TBG4"/>
    </source>
</evidence>
<evidence type="ECO:0000256" key="3">
    <source>
        <dbReference type="SAM" id="MobiDB-lite"/>
    </source>
</evidence>
<evidence type="ECO:0000305" key="4"/>
<accession>Q5E9S4</accession>
<gene>
    <name type="primary">ETNPPL</name>
    <name type="synonym">AGXT2L1</name>
</gene>
<proteinExistence type="evidence at transcript level"/>
<reference key="1">
    <citation type="journal article" date="2005" name="BMC Genomics">
        <title>Characterization of 954 bovine full-CDS cDNA sequences.</title>
        <authorList>
            <person name="Harhay G.P."/>
            <person name="Sonstegard T.S."/>
            <person name="Keele J.W."/>
            <person name="Heaton M.P."/>
            <person name="Clawson M.L."/>
            <person name="Snelling W.M."/>
            <person name="Wiedmann R.T."/>
            <person name="Van Tassell C.P."/>
            <person name="Smith T.P.L."/>
        </authorList>
    </citation>
    <scope>NUCLEOTIDE SEQUENCE [LARGE SCALE MRNA]</scope>
</reference>
<reference key="2">
    <citation type="submission" date="2006-09" db="EMBL/GenBank/DDBJ databases">
        <authorList>
            <consortium name="NIH - Mammalian Gene Collection (MGC) project"/>
        </authorList>
    </citation>
    <scope>NUCLEOTIDE SEQUENCE [LARGE SCALE MRNA]</scope>
    <source>
        <strain>Hereford</strain>
        <tissue>Thalamus</tissue>
    </source>
</reference>
<feature type="chain" id="PRO_0000287662" description="Ethanolamine-phosphate phospho-lyase">
    <location>
        <begin position="1"/>
        <end position="497"/>
    </location>
</feature>
<feature type="region of interest" description="Disordered" evidence="3">
    <location>
        <begin position="440"/>
        <end position="497"/>
    </location>
</feature>
<feature type="compositionally biased region" description="Basic and acidic residues" evidence="3">
    <location>
        <begin position="458"/>
        <end position="479"/>
    </location>
</feature>
<feature type="modified residue" description="N6-(pyridoxal phosphate)lysine" evidence="1">
    <location>
        <position position="278"/>
    </location>
</feature>
<sequence length="497" mass="55313">MCELYSKQETLALRRKHIGPSCKVFFAADPIKIVRAQRQYMFDEKGDQYLDCINNVAHVGHCHPEVVKAAQKQMELLNTNSRFLHDNIVEYAKRLSATLPDRLSVCYFTNSGSEANDLALRLARQFRGHQDVITLDHAYHGHLSSLIEISPYKFQKGKDVKKEFVHVAPAPDTYRGKYREDHVDPASAYADEVKKIIDEAHNSGRKIAAFIAESMQSCGGQIIPPAGYFQKVAEYVRGAGGVFIADEVQVGFGRVGKHFWSFQMFGEDFVPDIVTMGKPMGNGHPMACVVTTKEIAEAFSASGMEYFNTYGGNPVSSAVGLAVLDVIKNEDLQGNATRVGNYLTELLNKQKTKHTLIGDIRGVGLFIGIDLVKDHQQRTPATAEAQHIIYKMKEKRVLLSADGPHRNVLKIKPPMCFTEEDAKFMVEQLDGILTGLEEATGAETESGISKNTPCRTKMPKEAQSELLRDSSLESRENPSQKRNGLCTDSLLSKRLRT</sequence>
<keyword id="KW-0456">Lyase</keyword>
<keyword id="KW-0496">Mitochondrion</keyword>
<keyword id="KW-0663">Pyridoxal phosphate</keyword>
<keyword id="KW-1185">Reference proteome</keyword>
<organism>
    <name type="scientific">Bos taurus</name>
    <name type="common">Bovine</name>
    <dbReference type="NCBI Taxonomy" id="9913"/>
    <lineage>
        <taxon>Eukaryota</taxon>
        <taxon>Metazoa</taxon>
        <taxon>Chordata</taxon>
        <taxon>Craniata</taxon>
        <taxon>Vertebrata</taxon>
        <taxon>Euteleostomi</taxon>
        <taxon>Mammalia</taxon>
        <taxon>Eutheria</taxon>
        <taxon>Laurasiatheria</taxon>
        <taxon>Artiodactyla</taxon>
        <taxon>Ruminantia</taxon>
        <taxon>Pecora</taxon>
        <taxon>Bovidae</taxon>
        <taxon>Bovinae</taxon>
        <taxon>Bos</taxon>
    </lineage>
</organism>
<dbReference type="EC" id="4.2.3.2"/>
<dbReference type="EMBL" id="BT020846">
    <property type="protein sequence ID" value="AAX08863.1"/>
    <property type="molecule type" value="mRNA"/>
</dbReference>
<dbReference type="EMBL" id="BC123420">
    <property type="protein sequence ID" value="AAI23421.1"/>
    <property type="molecule type" value="mRNA"/>
</dbReference>
<dbReference type="RefSeq" id="NP_001015605.1">
    <property type="nucleotide sequence ID" value="NM_001015605.1"/>
</dbReference>
<dbReference type="SMR" id="Q5E9S4"/>
<dbReference type="FunCoup" id="Q5E9S4">
    <property type="interactions" value="54"/>
</dbReference>
<dbReference type="STRING" id="9913.ENSBTAP00000013587"/>
<dbReference type="PaxDb" id="9913-ENSBTAP00000013587"/>
<dbReference type="Ensembl" id="ENSBTAT00000013587.6">
    <property type="protein sequence ID" value="ENSBTAP00000013587.4"/>
    <property type="gene ID" value="ENSBTAG00000010284.6"/>
</dbReference>
<dbReference type="GeneID" id="515186"/>
<dbReference type="KEGG" id="bta:515186"/>
<dbReference type="CTD" id="64850"/>
<dbReference type="VEuPathDB" id="HostDB:ENSBTAG00000010284"/>
<dbReference type="VGNC" id="VGNC:53712">
    <property type="gene designation" value="ETNPPL"/>
</dbReference>
<dbReference type="eggNOG" id="KOG1403">
    <property type="taxonomic scope" value="Eukaryota"/>
</dbReference>
<dbReference type="GeneTree" id="ENSGT00940000157910"/>
<dbReference type="HOGENOM" id="CLU_016922_8_0_1"/>
<dbReference type="InParanoid" id="Q5E9S4"/>
<dbReference type="OMA" id="GAIETMK"/>
<dbReference type="OrthoDB" id="10261433at2759"/>
<dbReference type="TreeFam" id="TF320468"/>
<dbReference type="Reactome" id="R-BTA-1483213">
    <property type="pathway name" value="Synthesis of PE"/>
</dbReference>
<dbReference type="Proteomes" id="UP000009136">
    <property type="component" value="Chromosome 6"/>
</dbReference>
<dbReference type="Bgee" id="ENSBTAG00000010284">
    <property type="expression patterns" value="Expressed in rectus femoris and 67 other cell types or tissues"/>
</dbReference>
<dbReference type="GO" id="GO:0016020">
    <property type="term" value="C:membrane"/>
    <property type="evidence" value="ECO:0007669"/>
    <property type="project" value="GOC"/>
</dbReference>
<dbReference type="GO" id="GO:0005739">
    <property type="term" value="C:mitochondrion"/>
    <property type="evidence" value="ECO:0007669"/>
    <property type="project" value="UniProtKB-SubCell"/>
</dbReference>
<dbReference type="GO" id="GO:0050459">
    <property type="term" value="F:ethanolamine-phosphate phospho-lyase activity"/>
    <property type="evidence" value="ECO:0000318"/>
    <property type="project" value="GO_Central"/>
</dbReference>
<dbReference type="GO" id="GO:0030170">
    <property type="term" value="F:pyridoxal phosphate binding"/>
    <property type="evidence" value="ECO:0007669"/>
    <property type="project" value="InterPro"/>
</dbReference>
<dbReference type="GO" id="GO:0008483">
    <property type="term" value="F:transaminase activity"/>
    <property type="evidence" value="ECO:0007669"/>
    <property type="project" value="InterPro"/>
</dbReference>
<dbReference type="GO" id="GO:0071385">
    <property type="term" value="P:cellular response to glucocorticoid stimulus"/>
    <property type="evidence" value="ECO:0007669"/>
    <property type="project" value="Ensembl"/>
</dbReference>
<dbReference type="GO" id="GO:1905372">
    <property type="term" value="P:ceramide phosphoethanolamine catabolic process"/>
    <property type="evidence" value="ECO:0007669"/>
    <property type="project" value="Ensembl"/>
</dbReference>
<dbReference type="GO" id="GO:0055088">
    <property type="term" value="P:lipid homeostasis"/>
    <property type="evidence" value="ECO:0007669"/>
    <property type="project" value="Ensembl"/>
</dbReference>
<dbReference type="GO" id="GO:0006649">
    <property type="term" value="P:phospholipid transfer to membrane"/>
    <property type="evidence" value="ECO:0007669"/>
    <property type="project" value="Ensembl"/>
</dbReference>
<dbReference type="GO" id="GO:0032094">
    <property type="term" value="P:response to food"/>
    <property type="evidence" value="ECO:0007669"/>
    <property type="project" value="Ensembl"/>
</dbReference>
<dbReference type="CDD" id="cd00610">
    <property type="entry name" value="OAT_like"/>
    <property type="match status" value="1"/>
</dbReference>
<dbReference type="FunFam" id="3.40.640.10:FF:000058">
    <property type="entry name" value="ethanolamine-phosphate phospho-lyase isoform X1"/>
    <property type="match status" value="1"/>
</dbReference>
<dbReference type="Gene3D" id="3.90.1150.10">
    <property type="entry name" value="Aspartate Aminotransferase, domain 1"/>
    <property type="match status" value="1"/>
</dbReference>
<dbReference type="Gene3D" id="3.40.640.10">
    <property type="entry name" value="Type I PLP-dependent aspartate aminotransferase-like (Major domain)"/>
    <property type="match status" value="1"/>
</dbReference>
<dbReference type="InterPro" id="IPR005814">
    <property type="entry name" value="Aminotrans_3"/>
</dbReference>
<dbReference type="InterPro" id="IPR049704">
    <property type="entry name" value="Aminotrans_3_PPA_site"/>
</dbReference>
<dbReference type="InterPro" id="IPR015424">
    <property type="entry name" value="PyrdxlP-dep_Trfase"/>
</dbReference>
<dbReference type="InterPro" id="IPR015421">
    <property type="entry name" value="PyrdxlP-dep_Trfase_major"/>
</dbReference>
<dbReference type="InterPro" id="IPR015422">
    <property type="entry name" value="PyrdxlP-dep_Trfase_small"/>
</dbReference>
<dbReference type="PANTHER" id="PTHR45688">
    <property type="match status" value="1"/>
</dbReference>
<dbReference type="PANTHER" id="PTHR45688:SF1">
    <property type="entry name" value="ETHANOLAMINE-PHOSPHATE PHOSPHO-LYASE"/>
    <property type="match status" value="1"/>
</dbReference>
<dbReference type="Pfam" id="PF00202">
    <property type="entry name" value="Aminotran_3"/>
    <property type="match status" value="1"/>
</dbReference>
<dbReference type="SUPFAM" id="SSF53383">
    <property type="entry name" value="PLP-dependent transferases"/>
    <property type="match status" value="1"/>
</dbReference>
<dbReference type="PROSITE" id="PS00600">
    <property type="entry name" value="AA_TRANSFER_CLASS_3"/>
    <property type="match status" value="1"/>
</dbReference>